<gene>
    <name evidence="1" type="primary">rpsS</name>
    <name type="ordered locus">lpl0373</name>
</gene>
<evidence type="ECO:0000255" key="1">
    <source>
        <dbReference type="HAMAP-Rule" id="MF_00531"/>
    </source>
</evidence>
<evidence type="ECO:0000305" key="2"/>
<dbReference type="EMBL" id="CR628337">
    <property type="protein sequence ID" value="CAH14604.1"/>
    <property type="molecule type" value="Genomic_DNA"/>
</dbReference>
<dbReference type="RefSeq" id="WP_010946728.1">
    <property type="nucleotide sequence ID" value="NC_006369.1"/>
</dbReference>
<dbReference type="SMR" id="Q5WZK8"/>
<dbReference type="GeneID" id="57034336"/>
<dbReference type="KEGG" id="lpf:lpl0373"/>
<dbReference type="LegioList" id="lpl0373"/>
<dbReference type="HOGENOM" id="CLU_144911_0_1_6"/>
<dbReference type="Proteomes" id="UP000002517">
    <property type="component" value="Chromosome"/>
</dbReference>
<dbReference type="GO" id="GO:0005737">
    <property type="term" value="C:cytoplasm"/>
    <property type="evidence" value="ECO:0007669"/>
    <property type="project" value="UniProtKB-ARBA"/>
</dbReference>
<dbReference type="GO" id="GO:0015935">
    <property type="term" value="C:small ribosomal subunit"/>
    <property type="evidence" value="ECO:0007669"/>
    <property type="project" value="InterPro"/>
</dbReference>
<dbReference type="GO" id="GO:0019843">
    <property type="term" value="F:rRNA binding"/>
    <property type="evidence" value="ECO:0007669"/>
    <property type="project" value="UniProtKB-UniRule"/>
</dbReference>
<dbReference type="GO" id="GO:0003735">
    <property type="term" value="F:structural constituent of ribosome"/>
    <property type="evidence" value="ECO:0007669"/>
    <property type="project" value="InterPro"/>
</dbReference>
<dbReference type="GO" id="GO:0000028">
    <property type="term" value="P:ribosomal small subunit assembly"/>
    <property type="evidence" value="ECO:0007669"/>
    <property type="project" value="TreeGrafter"/>
</dbReference>
<dbReference type="GO" id="GO:0006412">
    <property type="term" value="P:translation"/>
    <property type="evidence" value="ECO:0007669"/>
    <property type="project" value="UniProtKB-UniRule"/>
</dbReference>
<dbReference type="FunFam" id="3.30.860.10:FF:000001">
    <property type="entry name" value="30S ribosomal protein S19"/>
    <property type="match status" value="1"/>
</dbReference>
<dbReference type="Gene3D" id="3.30.860.10">
    <property type="entry name" value="30s Ribosomal Protein S19, Chain A"/>
    <property type="match status" value="1"/>
</dbReference>
<dbReference type="HAMAP" id="MF_00531">
    <property type="entry name" value="Ribosomal_uS19"/>
    <property type="match status" value="1"/>
</dbReference>
<dbReference type="InterPro" id="IPR002222">
    <property type="entry name" value="Ribosomal_uS19"/>
</dbReference>
<dbReference type="InterPro" id="IPR005732">
    <property type="entry name" value="Ribosomal_uS19_bac-type"/>
</dbReference>
<dbReference type="InterPro" id="IPR020934">
    <property type="entry name" value="Ribosomal_uS19_CS"/>
</dbReference>
<dbReference type="InterPro" id="IPR023575">
    <property type="entry name" value="Ribosomal_uS19_SF"/>
</dbReference>
<dbReference type="NCBIfam" id="TIGR01050">
    <property type="entry name" value="rpsS_bact"/>
    <property type="match status" value="1"/>
</dbReference>
<dbReference type="PANTHER" id="PTHR11880">
    <property type="entry name" value="RIBOSOMAL PROTEIN S19P FAMILY MEMBER"/>
    <property type="match status" value="1"/>
</dbReference>
<dbReference type="PANTHER" id="PTHR11880:SF8">
    <property type="entry name" value="SMALL RIBOSOMAL SUBUNIT PROTEIN US19M"/>
    <property type="match status" value="1"/>
</dbReference>
<dbReference type="Pfam" id="PF00203">
    <property type="entry name" value="Ribosomal_S19"/>
    <property type="match status" value="1"/>
</dbReference>
<dbReference type="PIRSF" id="PIRSF002144">
    <property type="entry name" value="Ribosomal_S19"/>
    <property type="match status" value="1"/>
</dbReference>
<dbReference type="PRINTS" id="PR00975">
    <property type="entry name" value="RIBOSOMALS19"/>
</dbReference>
<dbReference type="SUPFAM" id="SSF54570">
    <property type="entry name" value="Ribosomal protein S19"/>
    <property type="match status" value="1"/>
</dbReference>
<dbReference type="PROSITE" id="PS00323">
    <property type="entry name" value="RIBOSOMAL_S19"/>
    <property type="match status" value="1"/>
</dbReference>
<reference key="1">
    <citation type="journal article" date="2004" name="Nat. Genet.">
        <title>Evidence in the Legionella pneumophila genome for exploitation of host cell functions and high genome plasticity.</title>
        <authorList>
            <person name="Cazalet C."/>
            <person name="Rusniok C."/>
            <person name="Brueggemann H."/>
            <person name="Zidane N."/>
            <person name="Magnier A."/>
            <person name="Ma L."/>
            <person name="Tichit M."/>
            <person name="Jarraud S."/>
            <person name="Bouchier C."/>
            <person name="Vandenesch F."/>
            <person name="Kunst F."/>
            <person name="Etienne J."/>
            <person name="Glaser P."/>
            <person name="Buchrieser C."/>
        </authorList>
    </citation>
    <scope>NUCLEOTIDE SEQUENCE [LARGE SCALE GENOMIC DNA]</scope>
    <source>
        <strain>Lens</strain>
    </source>
</reference>
<comment type="function">
    <text evidence="1">Protein S19 forms a complex with S13 that binds strongly to the 16S ribosomal RNA.</text>
</comment>
<comment type="similarity">
    <text evidence="1">Belongs to the universal ribosomal protein uS19 family.</text>
</comment>
<accession>Q5WZK8</accession>
<keyword id="KW-0687">Ribonucleoprotein</keyword>
<keyword id="KW-0689">Ribosomal protein</keyword>
<keyword id="KW-0694">RNA-binding</keyword>
<keyword id="KW-0699">rRNA-binding</keyword>
<name>RS19_LEGPL</name>
<feature type="chain" id="PRO_0000129840" description="Small ribosomal subunit protein uS19">
    <location>
        <begin position="1"/>
        <end position="92"/>
    </location>
</feature>
<proteinExistence type="inferred from homology"/>
<organism>
    <name type="scientific">Legionella pneumophila (strain Lens)</name>
    <dbReference type="NCBI Taxonomy" id="297245"/>
    <lineage>
        <taxon>Bacteria</taxon>
        <taxon>Pseudomonadati</taxon>
        <taxon>Pseudomonadota</taxon>
        <taxon>Gammaproteobacteria</taxon>
        <taxon>Legionellales</taxon>
        <taxon>Legionellaceae</taxon>
        <taxon>Legionella</taxon>
    </lineage>
</organism>
<sequence>MARSIRKGPFIDHHLISKVEAAIESKSKKPIKTWSRRSTIVPEMIDLTIAVHNGKDHVPVFITDNMVGHKLGEFAMTRTFKGHSGDRKAKGK</sequence>
<protein>
    <recommendedName>
        <fullName evidence="1">Small ribosomal subunit protein uS19</fullName>
    </recommendedName>
    <alternativeName>
        <fullName evidence="2">30S ribosomal protein S19</fullName>
    </alternativeName>
</protein>